<dbReference type="EMBL" id="U44118">
    <property type="protein sequence ID" value="AAB05014.1"/>
    <property type="molecule type" value="Genomic_DNA"/>
</dbReference>
<dbReference type="SMR" id="P0A133"/>
<dbReference type="GO" id="GO:0005829">
    <property type="term" value="C:cytosol"/>
    <property type="evidence" value="ECO:0007669"/>
    <property type="project" value="TreeGrafter"/>
</dbReference>
<dbReference type="GO" id="GO:0016020">
    <property type="term" value="C:membrane"/>
    <property type="evidence" value="ECO:0007669"/>
    <property type="project" value="TreeGrafter"/>
</dbReference>
<dbReference type="GO" id="GO:0043022">
    <property type="term" value="F:ribosome binding"/>
    <property type="evidence" value="ECO:0007669"/>
    <property type="project" value="TreeGrafter"/>
</dbReference>
<dbReference type="GO" id="GO:0003743">
    <property type="term" value="F:translation initiation factor activity"/>
    <property type="evidence" value="ECO:0007669"/>
    <property type="project" value="UniProtKB-UniRule"/>
</dbReference>
<dbReference type="GO" id="GO:0032790">
    <property type="term" value="P:ribosome disassembly"/>
    <property type="evidence" value="ECO:0007669"/>
    <property type="project" value="TreeGrafter"/>
</dbReference>
<dbReference type="FunFam" id="3.10.20.80:FF:000001">
    <property type="entry name" value="Translation initiation factor IF-3"/>
    <property type="match status" value="1"/>
</dbReference>
<dbReference type="FunFam" id="3.30.110.10:FF:000001">
    <property type="entry name" value="Translation initiation factor IF-3"/>
    <property type="match status" value="1"/>
</dbReference>
<dbReference type="Gene3D" id="3.30.110.10">
    <property type="entry name" value="Translation initiation factor 3 (IF-3), C-terminal domain"/>
    <property type="match status" value="1"/>
</dbReference>
<dbReference type="Gene3D" id="3.10.20.80">
    <property type="entry name" value="Translation initiation factor 3 (IF-3), N-terminal domain"/>
    <property type="match status" value="1"/>
</dbReference>
<dbReference type="HAMAP" id="MF_00080">
    <property type="entry name" value="IF_3"/>
    <property type="match status" value="1"/>
</dbReference>
<dbReference type="InterPro" id="IPR036788">
    <property type="entry name" value="T_IF-3_C_sf"/>
</dbReference>
<dbReference type="InterPro" id="IPR036787">
    <property type="entry name" value="T_IF-3_N_sf"/>
</dbReference>
<dbReference type="InterPro" id="IPR019813">
    <property type="entry name" value="Translation_initiation_fac3_CS"/>
</dbReference>
<dbReference type="InterPro" id="IPR001288">
    <property type="entry name" value="Translation_initiation_fac_3"/>
</dbReference>
<dbReference type="InterPro" id="IPR019815">
    <property type="entry name" value="Translation_initiation_fac_3_C"/>
</dbReference>
<dbReference type="InterPro" id="IPR019814">
    <property type="entry name" value="Translation_initiation_fac_3_N"/>
</dbReference>
<dbReference type="NCBIfam" id="TIGR00168">
    <property type="entry name" value="infC"/>
    <property type="match status" value="1"/>
</dbReference>
<dbReference type="PANTHER" id="PTHR10938">
    <property type="entry name" value="TRANSLATION INITIATION FACTOR IF-3"/>
    <property type="match status" value="1"/>
</dbReference>
<dbReference type="PANTHER" id="PTHR10938:SF0">
    <property type="entry name" value="TRANSLATION INITIATION FACTOR IF-3, MITOCHONDRIAL"/>
    <property type="match status" value="1"/>
</dbReference>
<dbReference type="Pfam" id="PF00707">
    <property type="entry name" value="IF3_C"/>
    <property type="match status" value="1"/>
</dbReference>
<dbReference type="Pfam" id="PF05198">
    <property type="entry name" value="IF3_N"/>
    <property type="match status" value="1"/>
</dbReference>
<dbReference type="SUPFAM" id="SSF55200">
    <property type="entry name" value="Translation initiation factor IF3, C-terminal domain"/>
    <property type="match status" value="1"/>
</dbReference>
<dbReference type="SUPFAM" id="SSF54364">
    <property type="entry name" value="Translation initiation factor IF3, N-terminal domain"/>
    <property type="match status" value="1"/>
</dbReference>
<dbReference type="PROSITE" id="PS00938">
    <property type="entry name" value="IF3"/>
    <property type="match status" value="1"/>
</dbReference>
<feature type="chain" id="PRO_0000177561" description="Translation initiation factor IF-3">
    <location>
        <begin position="1"/>
        <end position="183"/>
    </location>
</feature>
<comment type="function">
    <text evidence="1">IF-3 binds to the 30S ribosomal subunit and shifts the equilibrium between 70S ribosomes and their 50S and 30S subunits in favor of the free subunits, thus enhancing the availability of 30S subunits on which protein synthesis initiation begins.</text>
</comment>
<comment type="subunit">
    <text evidence="1">Monomer.</text>
</comment>
<comment type="subcellular location">
    <subcellularLocation>
        <location evidence="1">Cytoplasm</location>
    </subcellularLocation>
</comment>
<comment type="similarity">
    <text evidence="1">Belongs to the IF-3 family.</text>
</comment>
<proteinExistence type="inferred from homology"/>
<protein>
    <recommendedName>
        <fullName evidence="1">Translation initiation factor IF-3</fullName>
    </recommendedName>
</protein>
<evidence type="ECO:0000255" key="1">
    <source>
        <dbReference type="HAMAP-Rule" id="MF_00080"/>
    </source>
</evidence>
<organism>
    <name type="scientific">Pseudomonas syringae pv. syringae</name>
    <dbReference type="NCBI Taxonomy" id="321"/>
    <lineage>
        <taxon>Bacteria</taxon>
        <taxon>Pseudomonadati</taxon>
        <taxon>Pseudomonadota</taxon>
        <taxon>Gammaproteobacteria</taxon>
        <taxon>Pseudomonadales</taxon>
        <taxon>Pseudomonadaceae</taxon>
        <taxon>Pseudomonas</taxon>
        <taxon>Pseudomonas syringae</taxon>
    </lineage>
</organism>
<reference key="1">
    <citation type="journal article" date="1996" name="J. Bacteriol.">
        <title>Suppression of a sensor kinase-dependent phenotype in Pseudomonas syringae by ribosomal proteins L35 and L20.</title>
        <authorList>
            <person name="Kitten T."/>
            <person name="Willis D.K."/>
        </authorList>
    </citation>
    <scope>NUCLEOTIDE SEQUENCE [GENOMIC DNA]</scope>
    <source>
        <strain>SUPP27</strain>
    </source>
</reference>
<name>IF3_PSESY</name>
<keyword id="KW-0963">Cytoplasm</keyword>
<keyword id="KW-0396">Initiation factor</keyword>
<keyword id="KW-0648">Protein biosynthesis</keyword>
<gene>
    <name evidence="1" type="primary">infC</name>
</gene>
<sequence length="183" mass="20806">MIIKREMRQDKRAAPKAPINENISAREVRLIGADGEQIGIVSIDEALRIAEEAKLDLVEISADAVPPVCRVMDYGKSIFEKKKQVAAAKKNQKQIQVKEIKFRPGTEEGDYQVKLRNLVRFLSDGDRAKVSLRFRGREMAHQELGMELLKRVEGDLLEYGSVEQHPKMEGRQLIMVIAPKKKK</sequence>
<accession>P0A133</accession>
<accession>P52834</accession>